<feature type="chain" id="PRO_1000116838" description="Ribonuclease HII">
    <location>
        <begin position="1"/>
        <end position="257"/>
    </location>
</feature>
<feature type="domain" description="RNase H type-2" evidence="2">
    <location>
        <begin position="72"/>
        <end position="257"/>
    </location>
</feature>
<feature type="binding site" evidence="1">
    <location>
        <position position="78"/>
    </location>
    <ligand>
        <name>a divalent metal cation</name>
        <dbReference type="ChEBI" id="CHEBI:60240"/>
    </ligand>
</feature>
<feature type="binding site" evidence="1">
    <location>
        <position position="79"/>
    </location>
    <ligand>
        <name>a divalent metal cation</name>
        <dbReference type="ChEBI" id="CHEBI:60240"/>
    </ligand>
</feature>
<feature type="binding site" evidence="1">
    <location>
        <position position="170"/>
    </location>
    <ligand>
        <name>a divalent metal cation</name>
        <dbReference type="ChEBI" id="CHEBI:60240"/>
    </ligand>
</feature>
<sequence>MQKVTIQEAEHLLQEIISEEDDRFQILIKDERKGVQKLISKWYKQKELAQKEKEKFLEMSKYENALREKGLTYIAGIDEVGRGPLAGPVVTAAVILPEDFYIPGLNDSKKLSEAKRERFYGEIKAKAIAIGVXIVSPQVIDEINIYQATKQAMLDAIANLSCTPEYLLIDAMKLPTPIPQTSIIKGDAKSISISAASIIAKVTRDRMMKELGEKYPAYGFEQHMGYGTKQHLEAIEAHGVLEEHRKSFAPIKDMIQK</sequence>
<reference key="1">
    <citation type="submission" date="2008-10" db="EMBL/GenBank/DDBJ databases">
        <title>Genome sequence of Bacillus cereus AH820.</title>
        <authorList>
            <person name="Dodson R.J."/>
            <person name="Durkin A.S."/>
            <person name="Rosovitz M.J."/>
            <person name="Rasko D.A."/>
            <person name="Hoffmaster A."/>
            <person name="Ravel J."/>
            <person name="Sutton G."/>
        </authorList>
    </citation>
    <scope>NUCLEOTIDE SEQUENCE [LARGE SCALE GENOMIC DNA]</scope>
    <source>
        <strain>AH820</strain>
    </source>
</reference>
<gene>
    <name evidence="1" type="primary">rnhB</name>
    <name type="ordered locus">BCAH820_3850</name>
</gene>
<dbReference type="EC" id="3.1.26.4" evidence="1"/>
<dbReference type="EMBL" id="CP001283">
    <property type="protein sequence ID" value="ACK90204.1"/>
    <property type="molecule type" value="Genomic_DNA"/>
</dbReference>
<dbReference type="RefSeq" id="WP_001174715.1">
    <property type="nucleotide sequence ID" value="NC_011773.1"/>
</dbReference>
<dbReference type="KEGG" id="bcu:BCAH820_3850"/>
<dbReference type="HOGENOM" id="CLU_036532_2_1_9"/>
<dbReference type="Proteomes" id="UP000001363">
    <property type="component" value="Chromosome"/>
</dbReference>
<dbReference type="GO" id="GO:0005737">
    <property type="term" value="C:cytoplasm"/>
    <property type="evidence" value="ECO:0007669"/>
    <property type="project" value="UniProtKB-SubCell"/>
</dbReference>
<dbReference type="GO" id="GO:0032299">
    <property type="term" value="C:ribonuclease H2 complex"/>
    <property type="evidence" value="ECO:0007669"/>
    <property type="project" value="TreeGrafter"/>
</dbReference>
<dbReference type="GO" id="GO:0030145">
    <property type="term" value="F:manganese ion binding"/>
    <property type="evidence" value="ECO:0007669"/>
    <property type="project" value="UniProtKB-UniRule"/>
</dbReference>
<dbReference type="GO" id="GO:0003723">
    <property type="term" value="F:RNA binding"/>
    <property type="evidence" value="ECO:0007669"/>
    <property type="project" value="InterPro"/>
</dbReference>
<dbReference type="GO" id="GO:0004523">
    <property type="term" value="F:RNA-DNA hybrid ribonuclease activity"/>
    <property type="evidence" value="ECO:0007669"/>
    <property type="project" value="UniProtKB-UniRule"/>
</dbReference>
<dbReference type="GO" id="GO:0043137">
    <property type="term" value="P:DNA replication, removal of RNA primer"/>
    <property type="evidence" value="ECO:0007669"/>
    <property type="project" value="TreeGrafter"/>
</dbReference>
<dbReference type="GO" id="GO:0006298">
    <property type="term" value="P:mismatch repair"/>
    <property type="evidence" value="ECO:0007669"/>
    <property type="project" value="TreeGrafter"/>
</dbReference>
<dbReference type="CDD" id="cd07182">
    <property type="entry name" value="RNase_HII_bacteria_HII_like"/>
    <property type="match status" value="1"/>
</dbReference>
<dbReference type="FunFam" id="3.30.420.10:FF:000006">
    <property type="entry name" value="Ribonuclease HII"/>
    <property type="match status" value="1"/>
</dbReference>
<dbReference type="Gene3D" id="3.30.420.10">
    <property type="entry name" value="Ribonuclease H-like superfamily/Ribonuclease H"/>
    <property type="match status" value="1"/>
</dbReference>
<dbReference type="HAMAP" id="MF_00052_B">
    <property type="entry name" value="RNase_HII_B"/>
    <property type="match status" value="1"/>
</dbReference>
<dbReference type="InterPro" id="IPR022898">
    <property type="entry name" value="RNase_HII"/>
</dbReference>
<dbReference type="InterPro" id="IPR001352">
    <property type="entry name" value="RNase_HII/HIII"/>
</dbReference>
<dbReference type="InterPro" id="IPR024567">
    <property type="entry name" value="RNase_HII/HIII_dom"/>
</dbReference>
<dbReference type="InterPro" id="IPR012337">
    <property type="entry name" value="RNaseH-like_sf"/>
</dbReference>
<dbReference type="InterPro" id="IPR036397">
    <property type="entry name" value="RNaseH_sf"/>
</dbReference>
<dbReference type="NCBIfam" id="NF000594">
    <property type="entry name" value="PRK00015.1-1"/>
    <property type="match status" value="1"/>
</dbReference>
<dbReference type="NCBIfam" id="NF000595">
    <property type="entry name" value="PRK00015.1-3"/>
    <property type="match status" value="1"/>
</dbReference>
<dbReference type="PANTHER" id="PTHR10954">
    <property type="entry name" value="RIBONUCLEASE H2 SUBUNIT A"/>
    <property type="match status" value="1"/>
</dbReference>
<dbReference type="PANTHER" id="PTHR10954:SF18">
    <property type="entry name" value="RIBONUCLEASE HII"/>
    <property type="match status" value="1"/>
</dbReference>
<dbReference type="Pfam" id="PF01351">
    <property type="entry name" value="RNase_HII"/>
    <property type="match status" value="1"/>
</dbReference>
<dbReference type="SUPFAM" id="SSF53098">
    <property type="entry name" value="Ribonuclease H-like"/>
    <property type="match status" value="1"/>
</dbReference>
<dbReference type="PROSITE" id="PS51975">
    <property type="entry name" value="RNASE_H_2"/>
    <property type="match status" value="1"/>
</dbReference>
<protein>
    <recommendedName>
        <fullName evidence="1">Ribonuclease HII</fullName>
        <shortName evidence="1">RNase HII</shortName>
        <ecNumber evidence="1">3.1.26.4</ecNumber>
    </recommendedName>
</protein>
<evidence type="ECO:0000255" key="1">
    <source>
        <dbReference type="HAMAP-Rule" id="MF_00052"/>
    </source>
</evidence>
<evidence type="ECO:0000255" key="2">
    <source>
        <dbReference type="PROSITE-ProRule" id="PRU01319"/>
    </source>
</evidence>
<organism>
    <name type="scientific">Bacillus cereus (strain AH820)</name>
    <dbReference type="NCBI Taxonomy" id="405535"/>
    <lineage>
        <taxon>Bacteria</taxon>
        <taxon>Bacillati</taxon>
        <taxon>Bacillota</taxon>
        <taxon>Bacilli</taxon>
        <taxon>Bacillales</taxon>
        <taxon>Bacillaceae</taxon>
        <taxon>Bacillus</taxon>
        <taxon>Bacillus cereus group</taxon>
    </lineage>
</organism>
<name>RNH2_BACC0</name>
<keyword id="KW-0963">Cytoplasm</keyword>
<keyword id="KW-0255">Endonuclease</keyword>
<keyword id="KW-0378">Hydrolase</keyword>
<keyword id="KW-0464">Manganese</keyword>
<keyword id="KW-0479">Metal-binding</keyword>
<keyword id="KW-0540">Nuclease</keyword>
<proteinExistence type="inferred from homology"/>
<comment type="function">
    <text evidence="1">Endonuclease that specifically degrades the RNA of RNA-DNA hybrids.</text>
</comment>
<comment type="catalytic activity">
    <reaction evidence="1">
        <text>Endonucleolytic cleavage to 5'-phosphomonoester.</text>
        <dbReference type="EC" id="3.1.26.4"/>
    </reaction>
</comment>
<comment type="cofactor">
    <cofactor evidence="1">
        <name>Mn(2+)</name>
        <dbReference type="ChEBI" id="CHEBI:29035"/>
    </cofactor>
    <cofactor evidence="1">
        <name>Mg(2+)</name>
        <dbReference type="ChEBI" id="CHEBI:18420"/>
    </cofactor>
    <text evidence="1">Manganese or magnesium. Binds 1 divalent metal ion per monomer in the absence of substrate. May bind a second metal ion after substrate binding.</text>
</comment>
<comment type="subcellular location">
    <subcellularLocation>
        <location evidence="1">Cytoplasm</location>
    </subcellularLocation>
</comment>
<comment type="similarity">
    <text evidence="1">Belongs to the RNase HII family.</text>
</comment>
<accession>B7JJB6</accession>